<proteinExistence type="inferred from homology"/>
<organism>
    <name type="scientific">Rickettsia peacockii (strain Rustic)</name>
    <dbReference type="NCBI Taxonomy" id="562019"/>
    <lineage>
        <taxon>Bacteria</taxon>
        <taxon>Pseudomonadati</taxon>
        <taxon>Pseudomonadota</taxon>
        <taxon>Alphaproteobacteria</taxon>
        <taxon>Rickettsiales</taxon>
        <taxon>Rickettsiaceae</taxon>
        <taxon>Rickettsieae</taxon>
        <taxon>Rickettsia</taxon>
        <taxon>spotted fever group</taxon>
    </lineage>
</organism>
<keyword id="KW-0067">ATP-binding</keyword>
<keyword id="KW-0963">Cytoplasm</keyword>
<keyword id="KW-1015">Disulfide bond</keyword>
<keyword id="KW-0547">Nucleotide-binding</keyword>
<keyword id="KW-0694">RNA-binding</keyword>
<keyword id="KW-0808">Transferase</keyword>
<keyword id="KW-0819">tRNA processing</keyword>
<keyword id="KW-0820">tRNA-binding</keyword>
<protein>
    <recommendedName>
        <fullName evidence="1">tRNA-specific 2-thiouridylase MnmA</fullName>
        <ecNumber evidence="1">2.8.1.13</ecNumber>
    </recommendedName>
</protein>
<name>MNMA_RICPU</name>
<comment type="function">
    <text evidence="1">Catalyzes the 2-thiolation of uridine at the wobble position (U34) of tRNA, leading to the formation of s(2)U34.</text>
</comment>
<comment type="catalytic activity">
    <reaction evidence="1">
        <text>S-sulfanyl-L-cysteinyl-[protein] + uridine(34) in tRNA + AH2 + ATP = 2-thiouridine(34) in tRNA + L-cysteinyl-[protein] + A + AMP + diphosphate + H(+)</text>
        <dbReference type="Rhea" id="RHEA:47032"/>
        <dbReference type="Rhea" id="RHEA-COMP:10131"/>
        <dbReference type="Rhea" id="RHEA-COMP:11726"/>
        <dbReference type="Rhea" id="RHEA-COMP:11727"/>
        <dbReference type="Rhea" id="RHEA-COMP:11728"/>
        <dbReference type="ChEBI" id="CHEBI:13193"/>
        <dbReference type="ChEBI" id="CHEBI:15378"/>
        <dbReference type="ChEBI" id="CHEBI:17499"/>
        <dbReference type="ChEBI" id="CHEBI:29950"/>
        <dbReference type="ChEBI" id="CHEBI:30616"/>
        <dbReference type="ChEBI" id="CHEBI:33019"/>
        <dbReference type="ChEBI" id="CHEBI:61963"/>
        <dbReference type="ChEBI" id="CHEBI:65315"/>
        <dbReference type="ChEBI" id="CHEBI:87170"/>
        <dbReference type="ChEBI" id="CHEBI:456215"/>
        <dbReference type="EC" id="2.8.1.13"/>
    </reaction>
</comment>
<comment type="subcellular location">
    <subcellularLocation>
        <location evidence="1">Cytoplasm</location>
    </subcellularLocation>
</comment>
<comment type="similarity">
    <text evidence="1">Belongs to the MnmA/TRMU family.</text>
</comment>
<reference key="1">
    <citation type="journal article" date="2009" name="PLoS ONE">
        <title>Genome sequence of the endosymbiont Rickettsia peacockii and comparison with virulent Rickettsia rickettsii: identification of virulence factors.</title>
        <authorList>
            <person name="Felsheim R.F."/>
            <person name="Kurtti T.J."/>
            <person name="Munderloh U.G."/>
        </authorList>
    </citation>
    <scope>NUCLEOTIDE SEQUENCE [LARGE SCALE GENOMIC DNA]</scope>
    <source>
        <strain>Rustic</strain>
    </source>
</reference>
<sequence length="365" mass="40313">MINLGDKQSTIVVAMSGGVDSSAVAAMLHEQGHNVIGITLQLYDHGMAVGKKNSCCAGQDIYDAKMVANKLGIPHYVLDYESKFKESVIDNFVDSYLQGETPLPCVQCNKSVKFRDLIKTARELGADKLATGHYVRKINGDNGAELHTGLDPAKDQSYFLFMTTKEQLEYLRFPLGGLTKGETRKLASKFGLEVADKPDSQDICFIPDGNYKSVINKIRPNSSESGKIIHVNGFELGEHSGIINYTIGQRRGLGIAYNEPLYVVKIDPKDNIVYVGPESALNVQEFIIRDVNWLADEIKDNEKLEVAVKIRSTRPPRLAEISKLGDDKMKVKFLCEEKAVAPGQACVIYAGERVLGGGWITREIR</sequence>
<evidence type="ECO:0000255" key="1">
    <source>
        <dbReference type="HAMAP-Rule" id="MF_00144"/>
    </source>
</evidence>
<accession>C4K1W0</accession>
<dbReference type="EC" id="2.8.1.13" evidence="1"/>
<dbReference type="EMBL" id="CP001227">
    <property type="protein sequence ID" value="ACR47559.1"/>
    <property type="molecule type" value="Genomic_DNA"/>
</dbReference>
<dbReference type="RefSeq" id="WP_012736780.1">
    <property type="nucleotide sequence ID" value="NC_012730.1"/>
</dbReference>
<dbReference type="SMR" id="C4K1W0"/>
<dbReference type="KEGG" id="rpk:RPR_04380"/>
<dbReference type="HOGENOM" id="CLU_035188_0_1_5"/>
<dbReference type="Proteomes" id="UP000005015">
    <property type="component" value="Chromosome"/>
</dbReference>
<dbReference type="GO" id="GO:0005737">
    <property type="term" value="C:cytoplasm"/>
    <property type="evidence" value="ECO:0007669"/>
    <property type="project" value="UniProtKB-SubCell"/>
</dbReference>
<dbReference type="GO" id="GO:0005524">
    <property type="term" value="F:ATP binding"/>
    <property type="evidence" value="ECO:0007669"/>
    <property type="project" value="UniProtKB-KW"/>
</dbReference>
<dbReference type="GO" id="GO:0000049">
    <property type="term" value="F:tRNA binding"/>
    <property type="evidence" value="ECO:0007669"/>
    <property type="project" value="UniProtKB-KW"/>
</dbReference>
<dbReference type="GO" id="GO:0103016">
    <property type="term" value="F:tRNA-uridine 2-sulfurtransferase activity"/>
    <property type="evidence" value="ECO:0007669"/>
    <property type="project" value="UniProtKB-EC"/>
</dbReference>
<dbReference type="GO" id="GO:0002143">
    <property type="term" value="P:tRNA wobble position uridine thiolation"/>
    <property type="evidence" value="ECO:0007669"/>
    <property type="project" value="TreeGrafter"/>
</dbReference>
<dbReference type="CDD" id="cd01998">
    <property type="entry name" value="MnmA_TRMU-like"/>
    <property type="match status" value="1"/>
</dbReference>
<dbReference type="FunFam" id="2.30.30.280:FF:000001">
    <property type="entry name" value="tRNA-specific 2-thiouridylase MnmA"/>
    <property type="match status" value="1"/>
</dbReference>
<dbReference type="FunFam" id="2.40.30.10:FF:000127">
    <property type="entry name" value="tRNA-specific 2-thiouridylase MnmA"/>
    <property type="match status" value="1"/>
</dbReference>
<dbReference type="FunFam" id="3.40.50.620:FF:000115">
    <property type="entry name" value="tRNA-specific 2-thiouridylase MnmA"/>
    <property type="match status" value="1"/>
</dbReference>
<dbReference type="Gene3D" id="2.30.30.280">
    <property type="entry name" value="Adenine nucleotide alpha hydrolases-like domains"/>
    <property type="match status" value="1"/>
</dbReference>
<dbReference type="Gene3D" id="3.40.50.620">
    <property type="entry name" value="HUPs"/>
    <property type="match status" value="1"/>
</dbReference>
<dbReference type="Gene3D" id="2.40.30.10">
    <property type="entry name" value="Translation factors"/>
    <property type="match status" value="1"/>
</dbReference>
<dbReference type="HAMAP" id="MF_00144">
    <property type="entry name" value="tRNA_thiouridyl_MnmA"/>
    <property type="match status" value="1"/>
</dbReference>
<dbReference type="InterPro" id="IPR004506">
    <property type="entry name" value="MnmA-like"/>
</dbReference>
<dbReference type="InterPro" id="IPR046885">
    <property type="entry name" value="MnmA-like_C"/>
</dbReference>
<dbReference type="InterPro" id="IPR046884">
    <property type="entry name" value="MnmA-like_central"/>
</dbReference>
<dbReference type="InterPro" id="IPR023382">
    <property type="entry name" value="MnmA-like_central_sf"/>
</dbReference>
<dbReference type="InterPro" id="IPR014729">
    <property type="entry name" value="Rossmann-like_a/b/a_fold"/>
</dbReference>
<dbReference type="NCBIfam" id="NF001138">
    <property type="entry name" value="PRK00143.1"/>
    <property type="match status" value="1"/>
</dbReference>
<dbReference type="NCBIfam" id="TIGR00420">
    <property type="entry name" value="trmU"/>
    <property type="match status" value="1"/>
</dbReference>
<dbReference type="PANTHER" id="PTHR11933:SF5">
    <property type="entry name" value="MITOCHONDRIAL TRNA-SPECIFIC 2-THIOURIDYLASE 1"/>
    <property type="match status" value="1"/>
</dbReference>
<dbReference type="PANTHER" id="PTHR11933">
    <property type="entry name" value="TRNA 5-METHYLAMINOMETHYL-2-THIOURIDYLATE -METHYLTRANSFERASE"/>
    <property type="match status" value="1"/>
</dbReference>
<dbReference type="Pfam" id="PF03054">
    <property type="entry name" value="tRNA_Me_trans"/>
    <property type="match status" value="1"/>
</dbReference>
<dbReference type="Pfam" id="PF20258">
    <property type="entry name" value="tRNA_Me_trans_C"/>
    <property type="match status" value="1"/>
</dbReference>
<dbReference type="Pfam" id="PF20259">
    <property type="entry name" value="tRNA_Me_trans_M"/>
    <property type="match status" value="1"/>
</dbReference>
<dbReference type="SUPFAM" id="SSF52402">
    <property type="entry name" value="Adenine nucleotide alpha hydrolases-like"/>
    <property type="match status" value="1"/>
</dbReference>
<gene>
    <name evidence="1" type="primary">mnmA</name>
    <name type="ordered locus">RPR_04380</name>
</gene>
<feature type="chain" id="PRO_1000203314" description="tRNA-specific 2-thiouridylase MnmA">
    <location>
        <begin position="1"/>
        <end position="365"/>
    </location>
</feature>
<feature type="region of interest" description="Interaction with tRNA" evidence="1">
    <location>
        <begin position="154"/>
        <end position="156"/>
    </location>
</feature>
<feature type="active site" description="Nucleophile" evidence="1">
    <location>
        <position position="108"/>
    </location>
</feature>
<feature type="active site" description="Cysteine persulfide intermediate" evidence="1">
    <location>
        <position position="204"/>
    </location>
</feature>
<feature type="binding site" evidence="1">
    <location>
        <begin position="14"/>
        <end position="21"/>
    </location>
    <ligand>
        <name>ATP</name>
        <dbReference type="ChEBI" id="CHEBI:30616"/>
    </ligand>
</feature>
<feature type="binding site" evidence="1">
    <location>
        <position position="40"/>
    </location>
    <ligand>
        <name>ATP</name>
        <dbReference type="ChEBI" id="CHEBI:30616"/>
    </ligand>
</feature>
<feature type="binding site" evidence="1">
    <location>
        <position position="132"/>
    </location>
    <ligand>
        <name>ATP</name>
        <dbReference type="ChEBI" id="CHEBI:30616"/>
    </ligand>
</feature>
<feature type="site" description="Interaction with tRNA" evidence="1">
    <location>
        <position position="133"/>
    </location>
</feature>
<feature type="site" description="Interaction with tRNA" evidence="1">
    <location>
        <position position="344"/>
    </location>
</feature>
<feature type="disulfide bond" description="Alternate" evidence="1">
    <location>
        <begin position="108"/>
        <end position="204"/>
    </location>
</feature>